<dbReference type="EMBL" id="CP000255">
    <property type="protein sequence ID" value="ABD22345.1"/>
    <property type="molecule type" value="Genomic_DNA"/>
</dbReference>
<dbReference type="SMR" id="Q2FKQ2"/>
<dbReference type="KEGG" id="saa:SAUSA300_0004"/>
<dbReference type="HOGENOM" id="CLU_040267_0_1_9"/>
<dbReference type="Proteomes" id="UP000001939">
    <property type="component" value="Chromosome"/>
</dbReference>
<dbReference type="GO" id="GO:0005737">
    <property type="term" value="C:cytoplasm"/>
    <property type="evidence" value="ECO:0007669"/>
    <property type="project" value="UniProtKB-SubCell"/>
</dbReference>
<dbReference type="GO" id="GO:0005524">
    <property type="term" value="F:ATP binding"/>
    <property type="evidence" value="ECO:0007669"/>
    <property type="project" value="UniProtKB-UniRule"/>
</dbReference>
<dbReference type="GO" id="GO:0003697">
    <property type="term" value="F:single-stranded DNA binding"/>
    <property type="evidence" value="ECO:0007669"/>
    <property type="project" value="UniProtKB-UniRule"/>
</dbReference>
<dbReference type="GO" id="GO:0006260">
    <property type="term" value="P:DNA replication"/>
    <property type="evidence" value="ECO:0007669"/>
    <property type="project" value="UniProtKB-UniRule"/>
</dbReference>
<dbReference type="GO" id="GO:0000731">
    <property type="term" value="P:DNA synthesis involved in DNA repair"/>
    <property type="evidence" value="ECO:0007669"/>
    <property type="project" value="TreeGrafter"/>
</dbReference>
<dbReference type="GO" id="GO:0006302">
    <property type="term" value="P:double-strand break repair"/>
    <property type="evidence" value="ECO:0007669"/>
    <property type="project" value="TreeGrafter"/>
</dbReference>
<dbReference type="GO" id="GO:0009432">
    <property type="term" value="P:SOS response"/>
    <property type="evidence" value="ECO:0007669"/>
    <property type="project" value="UniProtKB-UniRule"/>
</dbReference>
<dbReference type="CDD" id="cd03242">
    <property type="entry name" value="ABC_RecF"/>
    <property type="match status" value="1"/>
</dbReference>
<dbReference type="FunFam" id="1.20.1050.90:FF:000002">
    <property type="entry name" value="DNA replication and repair protein RecF"/>
    <property type="match status" value="1"/>
</dbReference>
<dbReference type="Gene3D" id="3.40.50.300">
    <property type="entry name" value="P-loop containing nucleotide triphosphate hydrolases"/>
    <property type="match status" value="1"/>
</dbReference>
<dbReference type="Gene3D" id="1.20.1050.90">
    <property type="entry name" value="RecF/RecN/SMC, N-terminal domain"/>
    <property type="match status" value="1"/>
</dbReference>
<dbReference type="HAMAP" id="MF_00365">
    <property type="entry name" value="RecF"/>
    <property type="match status" value="1"/>
</dbReference>
<dbReference type="InterPro" id="IPR001238">
    <property type="entry name" value="DNA-binding_RecF"/>
</dbReference>
<dbReference type="InterPro" id="IPR018078">
    <property type="entry name" value="DNA-binding_RecF_CS"/>
</dbReference>
<dbReference type="InterPro" id="IPR027417">
    <property type="entry name" value="P-loop_NTPase"/>
</dbReference>
<dbReference type="InterPro" id="IPR003395">
    <property type="entry name" value="RecF/RecN/SMC_N"/>
</dbReference>
<dbReference type="InterPro" id="IPR042174">
    <property type="entry name" value="RecF_2"/>
</dbReference>
<dbReference type="NCBIfam" id="TIGR00611">
    <property type="entry name" value="recf"/>
    <property type="match status" value="1"/>
</dbReference>
<dbReference type="PANTHER" id="PTHR32182">
    <property type="entry name" value="DNA REPLICATION AND REPAIR PROTEIN RECF"/>
    <property type="match status" value="1"/>
</dbReference>
<dbReference type="PANTHER" id="PTHR32182:SF0">
    <property type="entry name" value="DNA REPLICATION AND REPAIR PROTEIN RECF"/>
    <property type="match status" value="1"/>
</dbReference>
<dbReference type="Pfam" id="PF02463">
    <property type="entry name" value="SMC_N"/>
    <property type="match status" value="1"/>
</dbReference>
<dbReference type="SUPFAM" id="SSF52540">
    <property type="entry name" value="P-loop containing nucleoside triphosphate hydrolases"/>
    <property type="match status" value="1"/>
</dbReference>
<dbReference type="PROSITE" id="PS00617">
    <property type="entry name" value="RECF_1"/>
    <property type="match status" value="1"/>
</dbReference>
<dbReference type="PROSITE" id="PS00618">
    <property type="entry name" value="RECF_2"/>
    <property type="match status" value="1"/>
</dbReference>
<organism>
    <name type="scientific">Staphylococcus aureus (strain USA300)</name>
    <dbReference type="NCBI Taxonomy" id="367830"/>
    <lineage>
        <taxon>Bacteria</taxon>
        <taxon>Bacillati</taxon>
        <taxon>Bacillota</taxon>
        <taxon>Bacilli</taxon>
        <taxon>Bacillales</taxon>
        <taxon>Staphylococcaceae</taxon>
        <taxon>Staphylococcus</taxon>
    </lineage>
</organism>
<sequence length="370" mass="42441">MKLNTLQLENYRNYDEVTLKCHPDVNILIGENAQGKTNLLESIYTLALAKSHRTSNDKELIRFNADYAKIEGELSYRHGTMPLTMFITKKGKQVKVNHLEQSRLTQYIGHLNVVLFAPEDLNIVKGSPQIRRRFIDMELGQISAVYLNDLAQYQRILKQKNNYLKQLQLGQKKDLTMLEVLNQQFAEYAMKVTDKRAHFIQELESLAKPIHAGITNDKEALSLNYLPSLKFDYAQNEAARLEEIMSILSDNMQREKERGISLFGPHRDDISFDVNGMDAQTYGSQGQQRTTALSIKLAEIELMNIEVGEYPILLLDDVLSELDDSRQTHLLSTIQHKVQTFVTTTSVDGIDHEIMNNPKLYRINQGEIIK</sequence>
<comment type="function">
    <text evidence="1">The RecF protein is involved in DNA metabolism; it is required for DNA replication and normal SOS inducibility. RecF binds preferentially to single-stranded, linear DNA. It also seems to bind ATP.</text>
</comment>
<comment type="subcellular location">
    <subcellularLocation>
        <location evidence="1">Cytoplasm</location>
    </subcellularLocation>
</comment>
<comment type="similarity">
    <text evidence="1">Belongs to the RecF family.</text>
</comment>
<reference key="1">
    <citation type="journal article" date="2006" name="Lancet">
        <title>Complete genome sequence of USA300, an epidemic clone of community-acquired meticillin-resistant Staphylococcus aureus.</title>
        <authorList>
            <person name="Diep B.A."/>
            <person name="Gill S.R."/>
            <person name="Chang R.F."/>
            <person name="Phan T.H."/>
            <person name="Chen J.H."/>
            <person name="Davidson M.G."/>
            <person name="Lin F."/>
            <person name="Lin J."/>
            <person name="Carleton H.A."/>
            <person name="Mongodin E.F."/>
            <person name="Sensabaugh G.F."/>
            <person name="Perdreau-Remington F."/>
        </authorList>
    </citation>
    <scope>NUCLEOTIDE SEQUENCE [LARGE SCALE GENOMIC DNA]</scope>
    <scope>ANTIBIOTIC RESISTANCE</scope>
    <source>
        <strain>USA300</strain>
    </source>
</reference>
<name>RECF_STAA3</name>
<proteinExistence type="inferred from homology"/>
<keyword id="KW-0067">ATP-binding</keyword>
<keyword id="KW-0963">Cytoplasm</keyword>
<keyword id="KW-0227">DNA damage</keyword>
<keyword id="KW-0234">DNA repair</keyword>
<keyword id="KW-0235">DNA replication</keyword>
<keyword id="KW-0238">DNA-binding</keyword>
<keyword id="KW-0547">Nucleotide-binding</keyword>
<keyword id="KW-0742">SOS response</keyword>
<protein>
    <recommendedName>
        <fullName evidence="1">DNA replication and repair protein RecF</fullName>
    </recommendedName>
</protein>
<accession>Q2FKQ2</accession>
<feature type="chain" id="PRO_0000236148" description="DNA replication and repair protein RecF">
    <location>
        <begin position="1"/>
        <end position="370"/>
    </location>
</feature>
<feature type="binding site" evidence="1">
    <location>
        <begin position="30"/>
        <end position="37"/>
    </location>
    <ligand>
        <name>ATP</name>
        <dbReference type="ChEBI" id="CHEBI:30616"/>
    </ligand>
</feature>
<evidence type="ECO:0000255" key="1">
    <source>
        <dbReference type="HAMAP-Rule" id="MF_00365"/>
    </source>
</evidence>
<gene>
    <name evidence="1" type="primary">recF</name>
    <name type="ordered locus">SAUSA300_0004</name>
</gene>